<accession>Q9ZTA2</accession>
<accession>A0JQ93</accession>
<organism>
    <name type="scientific">Arabidopsis thaliana</name>
    <name type="common">Mouse-ear cress</name>
    <dbReference type="NCBI Taxonomy" id="3702"/>
    <lineage>
        <taxon>Eukaryota</taxon>
        <taxon>Viridiplantae</taxon>
        <taxon>Streptophyta</taxon>
        <taxon>Embryophyta</taxon>
        <taxon>Tracheophyta</taxon>
        <taxon>Spermatophyta</taxon>
        <taxon>Magnoliopsida</taxon>
        <taxon>eudicotyledons</taxon>
        <taxon>Gunneridae</taxon>
        <taxon>Pentapetalae</taxon>
        <taxon>rosids</taxon>
        <taxon>malvids</taxon>
        <taxon>Brassicales</taxon>
        <taxon>Brassicaceae</taxon>
        <taxon>Camelineae</taxon>
        <taxon>Arabidopsis</taxon>
    </lineage>
</organism>
<gene>
    <name type="primary">AOP2</name>
    <name type="ordered locus">At4g03060</name>
    <name type="ORF">T4I9.6</name>
</gene>
<proteinExistence type="evidence at transcript level"/>
<keyword id="KW-0408">Iron</keyword>
<keyword id="KW-0479">Metal-binding</keyword>
<keyword id="KW-1185">Reference proteome</keyword>
<name>AOP2C_ARATH</name>
<dbReference type="EMBL" id="AF069442">
    <property type="protein sequence ID" value="AAC79099.1"/>
    <property type="molecule type" value="Genomic_DNA"/>
</dbReference>
<dbReference type="EMBL" id="AL161495">
    <property type="protein sequence ID" value="CAB77791.1"/>
    <property type="molecule type" value="Genomic_DNA"/>
</dbReference>
<dbReference type="EMBL" id="CP002687">
    <property type="status" value="NOT_ANNOTATED_CDS"/>
    <property type="molecule type" value="Genomic_DNA"/>
</dbReference>
<dbReference type="EMBL" id="BT029463">
    <property type="protein sequence ID" value="ABK59692.1"/>
    <property type="molecule type" value="mRNA"/>
</dbReference>
<dbReference type="PIR" id="T01387">
    <property type="entry name" value="T01387"/>
</dbReference>
<dbReference type="SMR" id="Q9ZTA2"/>
<dbReference type="FunCoup" id="Q9ZTA2">
    <property type="interactions" value="1"/>
</dbReference>
<dbReference type="STRING" id="3702.Q9ZTA2"/>
<dbReference type="PeptideAtlas" id="Q9ZTA2"/>
<dbReference type="Araport" id="AT4G03060"/>
<dbReference type="TAIR" id="AT4G03060"/>
<dbReference type="InParanoid" id="Q9ZTA2"/>
<dbReference type="PRO" id="PR:Q9ZTA2"/>
<dbReference type="Proteomes" id="UP000006548">
    <property type="component" value="Chromosome 4"/>
</dbReference>
<dbReference type="ExpressionAtlas" id="Q9ZTA2">
    <property type="expression patterns" value="baseline and differential"/>
</dbReference>
<dbReference type="GO" id="GO:0016706">
    <property type="term" value="F:2-oxoglutarate-dependent dioxygenase activity"/>
    <property type="evidence" value="ECO:0000318"/>
    <property type="project" value="GO_Central"/>
</dbReference>
<dbReference type="GO" id="GO:0046872">
    <property type="term" value="F:metal ion binding"/>
    <property type="evidence" value="ECO:0007669"/>
    <property type="project" value="UniProtKB-KW"/>
</dbReference>
<dbReference type="FunFam" id="2.60.120.330:FF:000062">
    <property type="entry name" value="2-oxoglutarate-dependent dioxygenase AOP3"/>
    <property type="match status" value="1"/>
</dbReference>
<dbReference type="Gene3D" id="2.60.120.330">
    <property type="entry name" value="B-lactam Antibiotic, Isopenicillin N Synthase, Chain"/>
    <property type="match status" value="2"/>
</dbReference>
<dbReference type="InterPro" id="IPR026992">
    <property type="entry name" value="DIOX_N"/>
</dbReference>
<dbReference type="InterPro" id="IPR044861">
    <property type="entry name" value="IPNS-like_FE2OG_OXY"/>
</dbReference>
<dbReference type="InterPro" id="IPR027443">
    <property type="entry name" value="IPNS-like_sf"/>
</dbReference>
<dbReference type="InterPro" id="IPR050231">
    <property type="entry name" value="Iron_ascorbate_oxido_reductase"/>
</dbReference>
<dbReference type="InterPro" id="IPR005123">
    <property type="entry name" value="Oxoglu/Fe-dep_dioxygenase_dom"/>
</dbReference>
<dbReference type="PANTHER" id="PTHR47990">
    <property type="entry name" value="2-OXOGLUTARATE (2OG) AND FE(II)-DEPENDENT OXYGENASE SUPERFAMILY PROTEIN-RELATED"/>
    <property type="match status" value="1"/>
</dbReference>
<dbReference type="Pfam" id="PF03171">
    <property type="entry name" value="2OG-FeII_Oxy"/>
    <property type="match status" value="1"/>
</dbReference>
<dbReference type="Pfam" id="PF14226">
    <property type="entry name" value="DIOX_N"/>
    <property type="match status" value="1"/>
</dbReference>
<dbReference type="SUPFAM" id="SSF51197">
    <property type="entry name" value="Clavaminate synthase-like"/>
    <property type="match status" value="2"/>
</dbReference>
<dbReference type="PROSITE" id="PS51471">
    <property type="entry name" value="FE2OG_OXY"/>
    <property type="match status" value="1"/>
</dbReference>
<comment type="cofactor">
    <cofactor evidence="1">
        <name>Fe(2+)</name>
        <dbReference type="ChEBI" id="CHEBI:29033"/>
    </cofactor>
    <text evidence="1">Binds 1 Fe(2+) ion per subunit.</text>
</comment>
<comment type="similarity">
    <text evidence="2">Belongs to the iron/ascorbate-dependent oxidoreductase family.</text>
</comment>
<comment type="caution">
    <text evidence="3">AOP1, AOP2 and AOP3 are found in tandem and inverted duplications on chromosome IV and encode 2-oxoglutarate-dependent dioxygenases involved in glucosinolates biosynthesis. In cv. Columbia, AOP2 (AC Q9ZTA2) cDNA contains a 5-bp deletion that leads to a non-functional protein and AOP3 (AC Q9ZTA1) is not expressed. The functional and expressed alleles for AOP2 (AC Q945B5) and AOP3 (AC Q945B4) are found in cv. Cvi and cv. Landsberg erecta, respectively. No ecotype coexpresses both AOP2 and AOP3 genes. The catalytic role of AOP1 is still uncertain (PubMed:11251105).</text>
</comment>
<feature type="chain" id="PRO_0000423934" description="Probable inactive 2-oxoglutarate-dependent dioxygenase AOP2">
    <location>
        <begin position="1"/>
        <end position="399"/>
    </location>
</feature>
<feature type="domain" description="Fe2OG dioxygenase" evidence="1">
    <location>
        <begin position="248"/>
        <end position="345"/>
    </location>
</feature>
<feature type="binding site" evidence="1">
    <location>
        <position position="268"/>
    </location>
    <ligand>
        <name>Fe cation</name>
        <dbReference type="ChEBI" id="CHEBI:24875"/>
    </ligand>
</feature>
<feature type="binding site" evidence="1">
    <location>
        <position position="270"/>
    </location>
    <ligand>
        <name>Fe cation</name>
        <dbReference type="ChEBI" id="CHEBI:24875"/>
    </ligand>
</feature>
<feature type="binding site" evidence="1">
    <location>
        <position position="325"/>
    </location>
    <ligand>
        <name>Fe cation</name>
        <dbReference type="ChEBI" id="CHEBI:24875"/>
    </ligand>
</feature>
<feature type="binding site" evidence="1">
    <location>
        <position position="336"/>
    </location>
    <ligand>
        <name>2-oxoglutarate</name>
        <dbReference type="ChEBI" id="CHEBI:16810"/>
    </ligand>
</feature>
<protein>
    <recommendedName>
        <fullName>Probable inactive 2-oxoglutarate-dependent dioxygenase AOP2</fullName>
    </recommendedName>
</protein>
<evidence type="ECO:0000255" key="1">
    <source>
        <dbReference type="PROSITE-ProRule" id="PRU00805"/>
    </source>
</evidence>
<evidence type="ECO:0000305" key="2"/>
<evidence type="ECO:0000305" key="3">
    <source>
    </source>
</evidence>
<sequence length="399" mass="44221">MGSCSLQLPLINLADKTLEPGSSKWAEVRSDVRKALEDFGCFEASYDKVSLELQESIMKTMEELFALPVETKQRNVCPKPYVGYLNHNNLSESLGISNANILENINEFTQQLWPHGDGNENISKTIQLFAEKLVEIDVMVRRMVMESFGIEKYIDDHLKSTAYATDELNIVGVEPNVGVKVNADISDDVNANASVNAGVGANVNADTGVNDNLNVDANVAVGGGVNANTDLGVGVNVNSNVAVNAKTGGDDVEANDDNEEKKLGLPCHTDKNLFTVLFQHEIEGLEVKTKDEKWIRVKPSPNTFIVIAGDSLCALMNGRIRAPYHRVRVTEKKRTRYTAAIFTCPKPDYVIEAPKELVDEKHPRLFRPFDYRDLFTFYHSEAGRKIQYTLQAYCAVSEA</sequence>
<reference key="1">
    <citation type="journal article" date="1999" name="Nature">
        <title>Sequence and analysis of chromosome 4 of the plant Arabidopsis thaliana.</title>
        <authorList>
            <person name="Mayer K.F.X."/>
            <person name="Schueller C."/>
            <person name="Wambutt R."/>
            <person name="Murphy G."/>
            <person name="Volckaert G."/>
            <person name="Pohl T."/>
            <person name="Duesterhoeft A."/>
            <person name="Stiekema W."/>
            <person name="Entian K.-D."/>
            <person name="Terryn N."/>
            <person name="Harris B."/>
            <person name="Ansorge W."/>
            <person name="Brandt P."/>
            <person name="Grivell L.A."/>
            <person name="Rieger M."/>
            <person name="Weichselgartner M."/>
            <person name="de Simone V."/>
            <person name="Obermaier B."/>
            <person name="Mache R."/>
            <person name="Mueller M."/>
            <person name="Kreis M."/>
            <person name="Delseny M."/>
            <person name="Puigdomenech P."/>
            <person name="Watson M."/>
            <person name="Schmidtheini T."/>
            <person name="Reichert B."/>
            <person name="Portetelle D."/>
            <person name="Perez-Alonso M."/>
            <person name="Boutry M."/>
            <person name="Bancroft I."/>
            <person name="Vos P."/>
            <person name="Hoheisel J."/>
            <person name="Zimmermann W."/>
            <person name="Wedler H."/>
            <person name="Ridley P."/>
            <person name="Langham S.-A."/>
            <person name="McCullagh B."/>
            <person name="Bilham L."/>
            <person name="Robben J."/>
            <person name="van der Schueren J."/>
            <person name="Grymonprez B."/>
            <person name="Chuang Y.-J."/>
            <person name="Vandenbussche F."/>
            <person name="Braeken M."/>
            <person name="Weltjens I."/>
            <person name="Voet M."/>
            <person name="Bastiaens I."/>
            <person name="Aert R."/>
            <person name="Defoor E."/>
            <person name="Weitzenegger T."/>
            <person name="Bothe G."/>
            <person name="Ramsperger U."/>
            <person name="Hilbert H."/>
            <person name="Braun M."/>
            <person name="Holzer E."/>
            <person name="Brandt A."/>
            <person name="Peters S."/>
            <person name="van Staveren M."/>
            <person name="Dirkse W."/>
            <person name="Mooijman P."/>
            <person name="Klein Lankhorst R."/>
            <person name="Rose M."/>
            <person name="Hauf J."/>
            <person name="Koetter P."/>
            <person name="Berneiser S."/>
            <person name="Hempel S."/>
            <person name="Feldpausch M."/>
            <person name="Lamberth S."/>
            <person name="Van den Daele H."/>
            <person name="De Keyser A."/>
            <person name="Buysshaert C."/>
            <person name="Gielen J."/>
            <person name="Villarroel R."/>
            <person name="De Clercq R."/>
            <person name="van Montagu M."/>
            <person name="Rogers J."/>
            <person name="Cronin A."/>
            <person name="Quail M.A."/>
            <person name="Bray-Allen S."/>
            <person name="Clark L."/>
            <person name="Doggett J."/>
            <person name="Hall S."/>
            <person name="Kay M."/>
            <person name="Lennard N."/>
            <person name="McLay K."/>
            <person name="Mayes R."/>
            <person name="Pettett A."/>
            <person name="Rajandream M.A."/>
            <person name="Lyne M."/>
            <person name="Benes V."/>
            <person name="Rechmann S."/>
            <person name="Borkova D."/>
            <person name="Bloecker H."/>
            <person name="Scharfe M."/>
            <person name="Grimm M."/>
            <person name="Loehnert T.-H."/>
            <person name="Dose S."/>
            <person name="de Haan M."/>
            <person name="Maarse A.C."/>
            <person name="Schaefer M."/>
            <person name="Mueller-Auer S."/>
            <person name="Gabel C."/>
            <person name="Fuchs M."/>
            <person name="Fartmann B."/>
            <person name="Granderath K."/>
            <person name="Dauner D."/>
            <person name="Herzl A."/>
            <person name="Neumann S."/>
            <person name="Argiriou A."/>
            <person name="Vitale D."/>
            <person name="Liguori R."/>
            <person name="Piravandi E."/>
            <person name="Massenet O."/>
            <person name="Quigley F."/>
            <person name="Clabauld G."/>
            <person name="Muendlein A."/>
            <person name="Felber R."/>
            <person name="Schnabl S."/>
            <person name="Hiller R."/>
            <person name="Schmidt W."/>
            <person name="Lecharny A."/>
            <person name="Aubourg S."/>
            <person name="Chefdor F."/>
            <person name="Cooke R."/>
            <person name="Berger C."/>
            <person name="Monfort A."/>
            <person name="Casacuberta E."/>
            <person name="Gibbons T."/>
            <person name="Weber N."/>
            <person name="Vandenbol M."/>
            <person name="Bargues M."/>
            <person name="Terol J."/>
            <person name="Torres A."/>
            <person name="Perez-Perez A."/>
            <person name="Purnelle B."/>
            <person name="Bent E."/>
            <person name="Johnson S."/>
            <person name="Tacon D."/>
            <person name="Jesse T."/>
            <person name="Heijnen L."/>
            <person name="Schwarz S."/>
            <person name="Scholler P."/>
            <person name="Heber S."/>
            <person name="Francs P."/>
            <person name="Bielke C."/>
            <person name="Frishman D."/>
            <person name="Haase D."/>
            <person name="Lemcke K."/>
            <person name="Mewes H.-W."/>
            <person name="Stocker S."/>
            <person name="Zaccaria P."/>
            <person name="Bevan M."/>
            <person name="Wilson R.K."/>
            <person name="de la Bastide M."/>
            <person name="Habermann K."/>
            <person name="Parnell L."/>
            <person name="Dedhia N."/>
            <person name="Gnoj L."/>
            <person name="Schutz K."/>
            <person name="Huang E."/>
            <person name="Spiegel L."/>
            <person name="Sekhon M."/>
            <person name="Murray J."/>
            <person name="Sheet P."/>
            <person name="Cordes M."/>
            <person name="Abu-Threideh J."/>
            <person name="Stoneking T."/>
            <person name="Kalicki J."/>
            <person name="Graves T."/>
            <person name="Harmon G."/>
            <person name="Edwards J."/>
            <person name="Latreille P."/>
            <person name="Courtney L."/>
            <person name="Cloud J."/>
            <person name="Abbott A."/>
            <person name="Scott K."/>
            <person name="Johnson D."/>
            <person name="Minx P."/>
            <person name="Bentley D."/>
            <person name="Fulton B."/>
            <person name="Miller N."/>
            <person name="Greco T."/>
            <person name="Kemp K."/>
            <person name="Kramer J."/>
            <person name="Fulton L."/>
            <person name="Mardis E."/>
            <person name="Dante M."/>
            <person name="Pepin K."/>
            <person name="Hillier L.W."/>
            <person name="Nelson J."/>
            <person name="Spieth J."/>
            <person name="Ryan E."/>
            <person name="Andrews S."/>
            <person name="Geisel C."/>
            <person name="Layman D."/>
            <person name="Du H."/>
            <person name="Ali J."/>
            <person name="Berghoff A."/>
            <person name="Jones K."/>
            <person name="Drone K."/>
            <person name="Cotton M."/>
            <person name="Joshu C."/>
            <person name="Antonoiu B."/>
            <person name="Zidanic M."/>
            <person name="Strong C."/>
            <person name="Sun H."/>
            <person name="Lamar B."/>
            <person name="Yordan C."/>
            <person name="Ma P."/>
            <person name="Zhong J."/>
            <person name="Preston R."/>
            <person name="Vil D."/>
            <person name="Shekher M."/>
            <person name="Matero A."/>
            <person name="Shah R."/>
            <person name="Swaby I.K."/>
            <person name="O'Shaughnessy A."/>
            <person name="Rodriguez M."/>
            <person name="Hoffman J."/>
            <person name="Till S."/>
            <person name="Granat S."/>
            <person name="Shohdy N."/>
            <person name="Hasegawa A."/>
            <person name="Hameed A."/>
            <person name="Lodhi M."/>
            <person name="Johnson A."/>
            <person name="Chen E."/>
            <person name="Marra M.A."/>
            <person name="Martienssen R."/>
            <person name="McCombie W.R."/>
        </authorList>
    </citation>
    <scope>NUCLEOTIDE SEQUENCE [LARGE SCALE GENOMIC DNA]</scope>
    <source>
        <strain>cv. Columbia</strain>
    </source>
</reference>
<reference key="2">
    <citation type="journal article" date="2017" name="Plant J.">
        <title>Araport11: a complete reannotation of the Arabidopsis thaliana reference genome.</title>
        <authorList>
            <person name="Cheng C.Y."/>
            <person name="Krishnakumar V."/>
            <person name="Chan A.P."/>
            <person name="Thibaud-Nissen F."/>
            <person name="Schobel S."/>
            <person name="Town C.D."/>
        </authorList>
    </citation>
    <scope>GENOME REANNOTATION</scope>
    <source>
        <strain>cv. Columbia</strain>
    </source>
</reference>
<reference key="3">
    <citation type="submission" date="2006-11" db="EMBL/GenBank/DDBJ databases">
        <title>Arabidopsis ORF Clones.</title>
        <authorList>
            <person name="Bautista V.R."/>
            <person name="Kim C.J."/>
            <person name="Chen H."/>
            <person name="Quinitio C."/>
            <person name="Ecker J.R."/>
        </authorList>
    </citation>
    <scope>NUCLEOTIDE SEQUENCE [LARGE SCALE MRNA] OF 168-399</scope>
    <source>
        <strain>cv. Columbia</strain>
    </source>
</reference>
<reference key="4">
    <citation type="journal article" date="2001" name="Plant Cell">
        <title>Gene duplication in the diversification of secondary metabolism: tandem 2-oxoglutarate-dependent dioxygenases control glucosinolate biosynthesis in Arabidopsis.</title>
        <authorList>
            <person name="Kliebenstein D.J."/>
            <person name="Lambrix V.M."/>
            <person name="Reichelt M."/>
            <person name="Gershenzon J."/>
            <person name="Mitchell-Olds T."/>
        </authorList>
    </citation>
    <scope>GENE FAMILY</scope>
</reference>